<proteinExistence type="inferred from homology"/>
<accession>A7FZ63</accession>
<feature type="chain" id="PRO_1000140941" description="Small ribosomal subunit protein uS3">
    <location>
        <begin position="1"/>
        <end position="223"/>
    </location>
</feature>
<feature type="domain" description="KH type-2" evidence="1">
    <location>
        <begin position="39"/>
        <end position="108"/>
    </location>
</feature>
<keyword id="KW-0687">Ribonucleoprotein</keyword>
<keyword id="KW-0689">Ribosomal protein</keyword>
<keyword id="KW-0694">RNA-binding</keyword>
<keyword id="KW-0699">rRNA-binding</keyword>
<gene>
    <name evidence="1" type="primary">rpsC</name>
    <name type="ordered locus">CLB_3531</name>
</gene>
<protein>
    <recommendedName>
        <fullName evidence="1">Small ribosomal subunit protein uS3</fullName>
    </recommendedName>
    <alternativeName>
        <fullName evidence="2">30S ribosomal protein S3</fullName>
    </alternativeName>
</protein>
<sequence length="223" mass="24981">MGQKVHPHGLRVGVIKEWDAKWYADKKNFADNLVEDHKIRNFVKKNSYAAGVSRIEIERAAKRIKLNIYTAKPGMIIGKGGQGIESLKNKLQKIVSNKNILINIVEVKRPEADAQLIAENIAQQLEKRIAFRRAMKQSIQRAMRSGVKGIKTACSGRLAGAEIARTEHYNEGTIPLQTLRADIDYGFAEADTTYGKIGVKVWVYKGEVLPARKNINEKEEANA</sequence>
<dbReference type="EMBL" id="CP000726">
    <property type="protein sequence ID" value="ABS35676.1"/>
    <property type="molecule type" value="Genomic_DNA"/>
</dbReference>
<dbReference type="RefSeq" id="WP_003385450.1">
    <property type="nucleotide sequence ID" value="NC_009697.1"/>
</dbReference>
<dbReference type="SMR" id="A7FZ63"/>
<dbReference type="GeneID" id="5184367"/>
<dbReference type="KEGG" id="cba:CLB_3531"/>
<dbReference type="HOGENOM" id="CLU_058591_0_2_9"/>
<dbReference type="GO" id="GO:0022627">
    <property type="term" value="C:cytosolic small ribosomal subunit"/>
    <property type="evidence" value="ECO:0007669"/>
    <property type="project" value="TreeGrafter"/>
</dbReference>
<dbReference type="GO" id="GO:0003729">
    <property type="term" value="F:mRNA binding"/>
    <property type="evidence" value="ECO:0007669"/>
    <property type="project" value="UniProtKB-UniRule"/>
</dbReference>
<dbReference type="GO" id="GO:0019843">
    <property type="term" value="F:rRNA binding"/>
    <property type="evidence" value="ECO:0007669"/>
    <property type="project" value="UniProtKB-UniRule"/>
</dbReference>
<dbReference type="GO" id="GO:0003735">
    <property type="term" value="F:structural constituent of ribosome"/>
    <property type="evidence" value="ECO:0007669"/>
    <property type="project" value="InterPro"/>
</dbReference>
<dbReference type="GO" id="GO:0006412">
    <property type="term" value="P:translation"/>
    <property type="evidence" value="ECO:0007669"/>
    <property type="project" value="UniProtKB-UniRule"/>
</dbReference>
<dbReference type="CDD" id="cd02412">
    <property type="entry name" value="KH-II_30S_S3"/>
    <property type="match status" value="1"/>
</dbReference>
<dbReference type="FunFam" id="3.30.1140.32:FF:000002">
    <property type="entry name" value="30S ribosomal protein S3"/>
    <property type="match status" value="1"/>
</dbReference>
<dbReference type="FunFam" id="3.30.300.20:FF:000001">
    <property type="entry name" value="30S ribosomal protein S3"/>
    <property type="match status" value="1"/>
</dbReference>
<dbReference type="Gene3D" id="3.30.300.20">
    <property type="match status" value="1"/>
</dbReference>
<dbReference type="Gene3D" id="3.30.1140.32">
    <property type="entry name" value="Ribosomal protein S3, C-terminal domain"/>
    <property type="match status" value="1"/>
</dbReference>
<dbReference type="HAMAP" id="MF_01309_B">
    <property type="entry name" value="Ribosomal_uS3_B"/>
    <property type="match status" value="1"/>
</dbReference>
<dbReference type="InterPro" id="IPR004087">
    <property type="entry name" value="KH_dom"/>
</dbReference>
<dbReference type="InterPro" id="IPR015946">
    <property type="entry name" value="KH_dom-like_a/b"/>
</dbReference>
<dbReference type="InterPro" id="IPR004044">
    <property type="entry name" value="KH_dom_type_2"/>
</dbReference>
<dbReference type="InterPro" id="IPR009019">
    <property type="entry name" value="KH_sf_prok-type"/>
</dbReference>
<dbReference type="InterPro" id="IPR036419">
    <property type="entry name" value="Ribosomal_S3_C_sf"/>
</dbReference>
<dbReference type="InterPro" id="IPR005704">
    <property type="entry name" value="Ribosomal_uS3_bac-typ"/>
</dbReference>
<dbReference type="InterPro" id="IPR001351">
    <property type="entry name" value="Ribosomal_uS3_C"/>
</dbReference>
<dbReference type="InterPro" id="IPR018280">
    <property type="entry name" value="Ribosomal_uS3_CS"/>
</dbReference>
<dbReference type="NCBIfam" id="TIGR01009">
    <property type="entry name" value="rpsC_bact"/>
    <property type="match status" value="1"/>
</dbReference>
<dbReference type="PANTHER" id="PTHR11760">
    <property type="entry name" value="30S/40S RIBOSOMAL PROTEIN S3"/>
    <property type="match status" value="1"/>
</dbReference>
<dbReference type="PANTHER" id="PTHR11760:SF19">
    <property type="entry name" value="SMALL RIBOSOMAL SUBUNIT PROTEIN US3C"/>
    <property type="match status" value="1"/>
</dbReference>
<dbReference type="Pfam" id="PF07650">
    <property type="entry name" value="KH_2"/>
    <property type="match status" value="1"/>
</dbReference>
<dbReference type="Pfam" id="PF00189">
    <property type="entry name" value="Ribosomal_S3_C"/>
    <property type="match status" value="1"/>
</dbReference>
<dbReference type="SMART" id="SM00322">
    <property type="entry name" value="KH"/>
    <property type="match status" value="1"/>
</dbReference>
<dbReference type="SUPFAM" id="SSF54814">
    <property type="entry name" value="Prokaryotic type KH domain (KH-domain type II)"/>
    <property type="match status" value="1"/>
</dbReference>
<dbReference type="SUPFAM" id="SSF54821">
    <property type="entry name" value="Ribosomal protein S3 C-terminal domain"/>
    <property type="match status" value="1"/>
</dbReference>
<dbReference type="PROSITE" id="PS50823">
    <property type="entry name" value="KH_TYPE_2"/>
    <property type="match status" value="1"/>
</dbReference>
<dbReference type="PROSITE" id="PS00548">
    <property type="entry name" value="RIBOSOMAL_S3"/>
    <property type="match status" value="1"/>
</dbReference>
<evidence type="ECO:0000255" key="1">
    <source>
        <dbReference type="HAMAP-Rule" id="MF_01309"/>
    </source>
</evidence>
<evidence type="ECO:0000305" key="2"/>
<reference key="1">
    <citation type="journal article" date="2007" name="PLoS ONE">
        <title>Analysis of the neurotoxin complex genes in Clostridium botulinum A1-A4 and B1 strains: BoNT/A3, /Ba4 and /B1 clusters are located within plasmids.</title>
        <authorList>
            <person name="Smith T.J."/>
            <person name="Hill K.K."/>
            <person name="Foley B.T."/>
            <person name="Detter J.C."/>
            <person name="Munk A.C."/>
            <person name="Bruce D.C."/>
            <person name="Doggett N.A."/>
            <person name="Smith L.A."/>
            <person name="Marks J.D."/>
            <person name="Xie G."/>
            <person name="Brettin T.S."/>
        </authorList>
    </citation>
    <scope>NUCLEOTIDE SEQUENCE [LARGE SCALE GENOMIC DNA]</scope>
    <source>
        <strain>ATCC 19397 / Type A</strain>
    </source>
</reference>
<name>RS3_CLOB1</name>
<comment type="function">
    <text evidence="1">Binds the lower part of the 30S subunit head. Binds mRNA in the 70S ribosome, positioning it for translation.</text>
</comment>
<comment type="subunit">
    <text evidence="1">Part of the 30S ribosomal subunit. Forms a tight complex with proteins S10 and S14.</text>
</comment>
<comment type="similarity">
    <text evidence="1">Belongs to the universal ribosomal protein uS3 family.</text>
</comment>
<organism>
    <name type="scientific">Clostridium botulinum (strain ATCC 19397 / Type A)</name>
    <dbReference type="NCBI Taxonomy" id="441770"/>
    <lineage>
        <taxon>Bacteria</taxon>
        <taxon>Bacillati</taxon>
        <taxon>Bacillota</taxon>
        <taxon>Clostridia</taxon>
        <taxon>Eubacteriales</taxon>
        <taxon>Clostridiaceae</taxon>
        <taxon>Clostridium</taxon>
    </lineage>
</organism>